<sequence length="444" mass="49093">MTLDLSKPANAGYQSGFANEFATEALPGALPHGRNSPQRAPYGLYAEQLSGTAFTAPRGHNRRSWLYRIRPAAVHRPFEPYAGPQRLVSEFGDSADVPPTPPDQLRWDPLPMPVEPTDFVDGLVTMAGNGSAAAMNGCAIHLYAANRSMQDRFFYSADGELLIVPQQGRLFIATEFGRVEVEPFEIAVIPRGVRFSVTLPDGDARGYICENFGAQLRLPDLGPIGSNGLANPRDFLTPQAAYEDREGAFELIAKLNGRLWRADIGHSPLDVVAWHGNYAPYKYDLRLFNTIGSISFDHPDPSIFLVLQSQSDTPGVDTIDFVIFPPRWLAAEDTFRPPWFHRNVASEFMGLVHGAYDAKAEGFVPGGASLHNCMSGHGPDADTFEKASASDTTKPHKVDATMAFMFETRTLIRPTRYALDTAQLQADYFECWQGIKKHFNPEQR</sequence>
<comment type="function">
    <text evidence="1">Involved in the catabolism of homogentisate (2,5-dihydroxyphenylacetate or 2,5-OH-PhAc), a central intermediate in the degradation of phenylalanine and tyrosine. Catalyzes the oxidative ring cleavage of the aromatic ring of homogentisate to yield maleylacetoacetate.</text>
</comment>
<comment type="catalytic activity">
    <reaction evidence="1">
        <text>homogentisate + O2 = 4-maleylacetoacetate + H(+)</text>
        <dbReference type="Rhea" id="RHEA:15449"/>
        <dbReference type="ChEBI" id="CHEBI:15378"/>
        <dbReference type="ChEBI" id="CHEBI:15379"/>
        <dbReference type="ChEBI" id="CHEBI:16169"/>
        <dbReference type="ChEBI" id="CHEBI:17105"/>
        <dbReference type="EC" id="1.13.11.5"/>
    </reaction>
</comment>
<comment type="cofactor">
    <cofactor evidence="1">
        <name>Fe cation</name>
        <dbReference type="ChEBI" id="CHEBI:24875"/>
    </cofactor>
</comment>
<comment type="pathway">
    <text evidence="1">Amino-acid degradation; L-phenylalanine degradation; acetoacetate and fumarate from L-phenylalanine: step 4/6.</text>
</comment>
<comment type="subunit">
    <text evidence="1">Hexamer; dimer of trimers.</text>
</comment>
<comment type="similarity">
    <text evidence="1">Belongs to the homogentisate dioxygenase family.</text>
</comment>
<organism>
    <name type="scientific">Burkholderia lata (strain ATCC 17760 / DSM 23089 / LMG 22485 / NCIMB 9086 / R18194 / 383)</name>
    <dbReference type="NCBI Taxonomy" id="482957"/>
    <lineage>
        <taxon>Bacteria</taxon>
        <taxon>Pseudomonadati</taxon>
        <taxon>Pseudomonadota</taxon>
        <taxon>Betaproteobacteria</taxon>
        <taxon>Burkholderiales</taxon>
        <taxon>Burkholderiaceae</taxon>
        <taxon>Burkholderia</taxon>
        <taxon>Burkholderia cepacia complex</taxon>
    </lineage>
</organism>
<proteinExistence type="inferred from homology"/>
<keyword id="KW-0223">Dioxygenase</keyword>
<keyword id="KW-0408">Iron</keyword>
<keyword id="KW-0479">Metal-binding</keyword>
<keyword id="KW-0560">Oxidoreductase</keyword>
<keyword id="KW-0585">Phenylalanine catabolism</keyword>
<keyword id="KW-0828">Tyrosine catabolism</keyword>
<reference key="1">
    <citation type="submission" date="2005-10" db="EMBL/GenBank/DDBJ databases">
        <title>Complete sequence of chromosome 1 of Burkholderia sp. 383.</title>
        <authorList>
            <consortium name="US DOE Joint Genome Institute"/>
            <person name="Copeland A."/>
            <person name="Lucas S."/>
            <person name="Lapidus A."/>
            <person name="Barry K."/>
            <person name="Detter J.C."/>
            <person name="Glavina T."/>
            <person name="Hammon N."/>
            <person name="Israni S."/>
            <person name="Pitluck S."/>
            <person name="Chain P."/>
            <person name="Malfatti S."/>
            <person name="Shin M."/>
            <person name="Vergez L."/>
            <person name="Schmutz J."/>
            <person name="Larimer F."/>
            <person name="Land M."/>
            <person name="Kyrpides N."/>
            <person name="Lykidis A."/>
            <person name="Richardson P."/>
        </authorList>
    </citation>
    <scope>NUCLEOTIDE SEQUENCE [LARGE SCALE GENOMIC DNA]</scope>
    <source>
        <strain>ATCC 17760 / DSM 23089 / LMG 22485 / NCIMB 9086 / R18194 / 383</strain>
    </source>
</reference>
<dbReference type="EC" id="1.13.11.5" evidence="1"/>
<dbReference type="EMBL" id="CP000151">
    <property type="protein sequence ID" value="ABB07512.1"/>
    <property type="molecule type" value="Genomic_DNA"/>
</dbReference>
<dbReference type="RefSeq" id="WP_011351095.1">
    <property type="nucleotide sequence ID" value="NC_007510.1"/>
</dbReference>
<dbReference type="SMR" id="Q39J54"/>
<dbReference type="GeneID" id="45093818"/>
<dbReference type="KEGG" id="bur:Bcep18194_A3913"/>
<dbReference type="PATRIC" id="fig|482957.22.peg.784"/>
<dbReference type="HOGENOM" id="CLU_027174_0_0_4"/>
<dbReference type="UniPathway" id="UPA00139">
    <property type="reaction ID" value="UER00339"/>
</dbReference>
<dbReference type="Proteomes" id="UP000002705">
    <property type="component" value="Chromosome 1"/>
</dbReference>
<dbReference type="GO" id="GO:0005737">
    <property type="term" value="C:cytoplasm"/>
    <property type="evidence" value="ECO:0007669"/>
    <property type="project" value="TreeGrafter"/>
</dbReference>
<dbReference type="GO" id="GO:0004411">
    <property type="term" value="F:homogentisate 1,2-dioxygenase activity"/>
    <property type="evidence" value="ECO:0007669"/>
    <property type="project" value="UniProtKB-UniRule"/>
</dbReference>
<dbReference type="GO" id="GO:0005506">
    <property type="term" value="F:iron ion binding"/>
    <property type="evidence" value="ECO:0007669"/>
    <property type="project" value="UniProtKB-UniRule"/>
</dbReference>
<dbReference type="GO" id="GO:0006559">
    <property type="term" value="P:L-phenylalanine catabolic process"/>
    <property type="evidence" value="ECO:0007669"/>
    <property type="project" value="UniProtKB-UniRule"/>
</dbReference>
<dbReference type="GO" id="GO:0006572">
    <property type="term" value="P:tyrosine catabolic process"/>
    <property type="evidence" value="ECO:0007669"/>
    <property type="project" value="UniProtKB-UniRule"/>
</dbReference>
<dbReference type="CDD" id="cd07000">
    <property type="entry name" value="cupin_HGO_N"/>
    <property type="match status" value="1"/>
</dbReference>
<dbReference type="FunFam" id="2.60.120.10:FF:000034">
    <property type="entry name" value="Homogentisate 1,2-dioxygenase"/>
    <property type="match status" value="1"/>
</dbReference>
<dbReference type="Gene3D" id="2.60.120.10">
    <property type="entry name" value="Jelly Rolls"/>
    <property type="match status" value="1"/>
</dbReference>
<dbReference type="HAMAP" id="MF_00334">
    <property type="entry name" value="Homogentis_dioxygen"/>
    <property type="match status" value="1"/>
</dbReference>
<dbReference type="InterPro" id="IPR046451">
    <property type="entry name" value="HgmA_C"/>
</dbReference>
<dbReference type="InterPro" id="IPR046452">
    <property type="entry name" value="HgmA_N"/>
</dbReference>
<dbReference type="InterPro" id="IPR005708">
    <property type="entry name" value="Homogentis_dOase"/>
</dbReference>
<dbReference type="InterPro" id="IPR022950">
    <property type="entry name" value="Homogentis_dOase_bac"/>
</dbReference>
<dbReference type="InterPro" id="IPR014710">
    <property type="entry name" value="RmlC-like_jellyroll"/>
</dbReference>
<dbReference type="InterPro" id="IPR011051">
    <property type="entry name" value="RmlC_Cupin_sf"/>
</dbReference>
<dbReference type="NCBIfam" id="TIGR01015">
    <property type="entry name" value="hmgA"/>
    <property type="match status" value="1"/>
</dbReference>
<dbReference type="PANTHER" id="PTHR11056">
    <property type="entry name" value="HOMOGENTISATE 1,2-DIOXYGENASE"/>
    <property type="match status" value="1"/>
</dbReference>
<dbReference type="PANTHER" id="PTHR11056:SF0">
    <property type="entry name" value="HOMOGENTISATE 1,2-DIOXYGENASE"/>
    <property type="match status" value="1"/>
</dbReference>
<dbReference type="Pfam" id="PF04209">
    <property type="entry name" value="HgmA_C"/>
    <property type="match status" value="1"/>
</dbReference>
<dbReference type="Pfam" id="PF20510">
    <property type="entry name" value="HgmA_N"/>
    <property type="match status" value="1"/>
</dbReference>
<dbReference type="SUPFAM" id="SSF51182">
    <property type="entry name" value="RmlC-like cupins"/>
    <property type="match status" value="1"/>
</dbReference>
<evidence type="ECO:0000255" key="1">
    <source>
        <dbReference type="HAMAP-Rule" id="MF_00334"/>
    </source>
</evidence>
<accession>Q39J54</accession>
<gene>
    <name evidence="1" type="primary">hmgA</name>
    <name type="ordered locus">Bcep18194_A3913</name>
</gene>
<protein>
    <recommendedName>
        <fullName evidence="1">Homogentisate 1,2-dioxygenase</fullName>
        <shortName evidence="1">HGDO</shortName>
        <ecNumber evidence="1">1.13.11.5</ecNumber>
    </recommendedName>
    <alternativeName>
        <fullName evidence="1">Homogentisate oxygenase</fullName>
    </alternativeName>
    <alternativeName>
        <fullName evidence="1">Homogentisic acid oxidase</fullName>
    </alternativeName>
    <alternativeName>
        <fullName evidence="1">Homogentisicase</fullName>
    </alternativeName>
</protein>
<feature type="chain" id="PRO_0000225788" description="Homogentisate 1,2-dioxygenase">
    <location>
        <begin position="1"/>
        <end position="444"/>
    </location>
</feature>
<feature type="active site" description="Proton acceptor" evidence="1">
    <location>
        <position position="298"/>
    </location>
</feature>
<feature type="binding site" evidence="1">
    <location>
        <position position="341"/>
    </location>
    <ligand>
        <name>Fe cation</name>
        <dbReference type="ChEBI" id="CHEBI:24875"/>
    </ligand>
</feature>
<feature type="binding site" evidence="1">
    <location>
        <position position="347"/>
    </location>
    <ligand>
        <name>Fe cation</name>
        <dbReference type="ChEBI" id="CHEBI:24875"/>
    </ligand>
</feature>
<feature type="binding site" evidence="1">
    <location>
        <position position="356"/>
    </location>
    <ligand>
        <name>homogentisate</name>
        <dbReference type="ChEBI" id="CHEBI:16169"/>
    </ligand>
</feature>
<feature type="binding site" evidence="1">
    <location>
        <position position="377"/>
    </location>
    <ligand>
        <name>Fe cation</name>
        <dbReference type="ChEBI" id="CHEBI:24875"/>
    </ligand>
</feature>
<feature type="binding site" evidence="1">
    <location>
        <position position="377"/>
    </location>
    <ligand>
        <name>homogentisate</name>
        <dbReference type="ChEBI" id="CHEBI:16169"/>
    </ligand>
</feature>
<name>HGD_BURL3</name>